<keyword id="KW-0030">Aminoacyl-tRNA synthetase</keyword>
<keyword id="KW-0067">ATP-binding</keyword>
<keyword id="KW-0963">Cytoplasm</keyword>
<keyword id="KW-0436">Ligase</keyword>
<keyword id="KW-0547">Nucleotide-binding</keyword>
<keyword id="KW-0648">Protein biosynthesis</keyword>
<protein>
    <recommendedName>
        <fullName evidence="1">Serine--tRNA ligase</fullName>
        <ecNumber evidence="1">6.1.1.11</ecNumber>
    </recommendedName>
    <alternativeName>
        <fullName evidence="1">Seryl-tRNA synthetase</fullName>
        <shortName evidence="1">SerRS</shortName>
    </alternativeName>
    <alternativeName>
        <fullName evidence="1">Seryl-tRNA(Ser/Sec) synthetase</fullName>
    </alternativeName>
</protein>
<evidence type="ECO:0000255" key="1">
    <source>
        <dbReference type="HAMAP-Rule" id="MF_00176"/>
    </source>
</evidence>
<organism>
    <name type="scientific">Dehalococcoides mccartyi (strain ATCC BAA-2100 / JCM 16839 / KCTC 5957 / BAV1)</name>
    <dbReference type="NCBI Taxonomy" id="216389"/>
    <lineage>
        <taxon>Bacteria</taxon>
        <taxon>Bacillati</taxon>
        <taxon>Chloroflexota</taxon>
        <taxon>Dehalococcoidia</taxon>
        <taxon>Dehalococcoidales</taxon>
        <taxon>Dehalococcoidaceae</taxon>
        <taxon>Dehalococcoides</taxon>
    </lineage>
</organism>
<dbReference type="EC" id="6.1.1.11" evidence="1"/>
<dbReference type="EMBL" id="CP000688">
    <property type="protein sequence ID" value="ABQ17135.1"/>
    <property type="molecule type" value="Genomic_DNA"/>
</dbReference>
<dbReference type="SMR" id="A5FRN4"/>
<dbReference type="KEGG" id="deb:DehaBAV1_0550"/>
<dbReference type="PATRIC" id="fig|216389.18.peg.596"/>
<dbReference type="HOGENOM" id="CLU_023797_1_1_0"/>
<dbReference type="UniPathway" id="UPA00906">
    <property type="reaction ID" value="UER00895"/>
</dbReference>
<dbReference type="GO" id="GO:0005737">
    <property type="term" value="C:cytoplasm"/>
    <property type="evidence" value="ECO:0007669"/>
    <property type="project" value="UniProtKB-SubCell"/>
</dbReference>
<dbReference type="GO" id="GO:0005524">
    <property type="term" value="F:ATP binding"/>
    <property type="evidence" value="ECO:0007669"/>
    <property type="project" value="UniProtKB-UniRule"/>
</dbReference>
<dbReference type="GO" id="GO:0004828">
    <property type="term" value="F:serine-tRNA ligase activity"/>
    <property type="evidence" value="ECO:0007669"/>
    <property type="project" value="UniProtKB-UniRule"/>
</dbReference>
<dbReference type="GO" id="GO:0016260">
    <property type="term" value="P:selenocysteine biosynthetic process"/>
    <property type="evidence" value="ECO:0007669"/>
    <property type="project" value="UniProtKB-UniRule"/>
</dbReference>
<dbReference type="GO" id="GO:0006434">
    <property type="term" value="P:seryl-tRNA aminoacylation"/>
    <property type="evidence" value="ECO:0007669"/>
    <property type="project" value="UniProtKB-UniRule"/>
</dbReference>
<dbReference type="CDD" id="cd00770">
    <property type="entry name" value="SerRS_core"/>
    <property type="match status" value="1"/>
</dbReference>
<dbReference type="Gene3D" id="3.30.930.10">
    <property type="entry name" value="Bira Bifunctional Protein, Domain 2"/>
    <property type="match status" value="1"/>
</dbReference>
<dbReference type="Gene3D" id="1.10.287.40">
    <property type="entry name" value="Serine-tRNA synthetase, tRNA binding domain"/>
    <property type="match status" value="1"/>
</dbReference>
<dbReference type="HAMAP" id="MF_00176">
    <property type="entry name" value="Ser_tRNA_synth_type1"/>
    <property type="match status" value="1"/>
</dbReference>
<dbReference type="InterPro" id="IPR002314">
    <property type="entry name" value="aa-tRNA-synt_IIb"/>
</dbReference>
<dbReference type="InterPro" id="IPR006195">
    <property type="entry name" value="aa-tRNA-synth_II"/>
</dbReference>
<dbReference type="InterPro" id="IPR045864">
    <property type="entry name" value="aa-tRNA-synth_II/BPL/LPL"/>
</dbReference>
<dbReference type="InterPro" id="IPR002317">
    <property type="entry name" value="Ser-tRNA-ligase_type_1"/>
</dbReference>
<dbReference type="InterPro" id="IPR015866">
    <property type="entry name" value="Ser-tRNA-synth_1_N"/>
</dbReference>
<dbReference type="InterPro" id="IPR042103">
    <property type="entry name" value="SerRS_1_N_sf"/>
</dbReference>
<dbReference type="InterPro" id="IPR033729">
    <property type="entry name" value="SerRS_core"/>
</dbReference>
<dbReference type="InterPro" id="IPR010978">
    <property type="entry name" value="tRNA-bd_arm"/>
</dbReference>
<dbReference type="NCBIfam" id="TIGR00414">
    <property type="entry name" value="serS"/>
    <property type="match status" value="1"/>
</dbReference>
<dbReference type="PANTHER" id="PTHR43697:SF1">
    <property type="entry name" value="SERINE--TRNA LIGASE"/>
    <property type="match status" value="1"/>
</dbReference>
<dbReference type="PANTHER" id="PTHR43697">
    <property type="entry name" value="SERYL-TRNA SYNTHETASE"/>
    <property type="match status" value="1"/>
</dbReference>
<dbReference type="Pfam" id="PF02403">
    <property type="entry name" value="Seryl_tRNA_N"/>
    <property type="match status" value="1"/>
</dbReference>
<dbReference type="Pfam" id="PF00587">
    <property type="entry name" value="tRNA-synt_2b"/>
    <property type="match status" value="1"/>
</dbReference>
<dbReference type="PIRSF" id="PIRSF001529">
    <property type="entry name" value="Ser-tRNA-synth_IIa"/>
    <property type="match status" value="1"/>
</dbReference>
<dbReference type="PRINTS" id="PR00981">
    <property type="entry name" value="TRNASYNTHSER"/>
</dbReference>
<dbReference type="SUPFAM" id="SSF55681">
    <property type="entry name" value="Class II aaRS and biotin synthetases"/>
    <property type="match status" value="1"/>
</dbReference>
<dbReference type="SUPFAM" id="SSF46589">
    <property type="entry name" value="tRNA-binding arm"/>
    <property type="match status" value="1"/>
</dbReference>
<dbReference type="PROSITE" id="PS50862">
    <property type="entry name" value="AA_TRNA_LIGASE_II"/>
    <property type="match status" value="1"/>
</dbReference>
<reference key="1">
    <citation type="submission" date="2007-05" db="EMBL/GenBank/DDBJ databases">
        <title>Complete sequence of Dehalococcoides sp. BAV1.</title>
        <authorList>
            <consortium name="US DOE Joint Genome Institute"/>
            <person name="Copeland A."/>
            <person name="Lucas S."/>
            <person name="Lapidus A."/>
            <person name="Barry K."/>
            <person name="Detter J.C."/>
            <person name="Glavina del Rio T."/>
            <person name="Hammon N."/>
            <person name="Israni S."/>
            <person name="Pitluck S."/>
            <person name="Lowry S."/>
            <person name="Clum A."/>
            <person name="Schmutz J."/>
            <person name="Larimer F."/>
            <person name="Land M."/>
            <person name="Hauser L."/>
            <person name="Kyrpides N."/>
            <person name="Kim E."/>
            <person name="Ritalahti K.M."/>
            <person name="Loeffler F."/>
            <person name="Richardson P."/>
        </authorList>
    </citation>
    <scope>NUCLEOTIDE SEQUENCE [LARGE SCALE GENOMIC DNA]</scope>
    <source>
        <strain>ATCC BAA-2100 / JCM 16839 / KCTC 5957 / BAV1</strain>
    </source>
</reference>
<gene>
    <name evidence="1" type="primary">serS</name>
    <name type="ordered locus">DehaBAV1_0550</name>
</gene>
<feature type="chain" id="PRO_1000077195" description="Serine--tRNA ligase">
    <location>
        <begin position="1"/>
        <end position="413"/>
    </location>
</feature>
<feature type="binding site" evidence="1">
    <location>
        <begin position="221"/>
        <end position="223"/>
    </location>
    <ligand>
        <name>L-serine</name>
        <dbReference type="ChEBI" id="CHEBI:33384"/>
    </ligand>
</feature>
<feature type="binding site" evidence="1">
    <location>
        <begin position="252"/>
        <end position="254"/>
    </location>
    <ligand>
        <name>ATP</name>
        <dbReference type="ChEBI" id="CHEBI:30616"/>
    </ligand>
</feature>
<feature type="binding site" evidence="1">
    <location>
        <position position="275"/>
    </location>
    <ligand>
        <name>L-serine</name>
        <dbReference type="ChEBI" id="CHEBI:33384"/>
    </ligand>
</feature>
<feature type="binding site" evidence="1">
    <location>
        <begin position="339"/>
        <end position="342"/>
    </location>
    <ligand>
        <name>ATP</name>
        <dbReference type="ChEBI" id="CHEBI:30616"/>
    </ligand>
</feature>
<feature type="binding site" evidence="1">
    <location>
        <position position="375"/>
    </location>
    <ligand>
        <name>L-serine</name>
        <dbReference type="ChEBI" id="CHEBI:33384"/>
    </ligand>
</feature>
<sequence>MLDLKFIRENPELVRKAVADRNTDAPIDEILELDNSRRNLTQELDNLRAKRKIMAKQRDETAIEEGRVLRGQISTLESELSQVDEKLTDRLLRVPNIPDPSVPVGKDESENVVLYYRGEKRNFSFTPKPHWELGEALDIIDFDRGIKLSGSRFYILKGAGARLQRALIAFMLDLHTRKHDYTEIYPPYMIKRECLVASGNLPKFADNLYHDAEEDYWWVPTAEAPLTNLHRDEILSAEQLPIHYVAYTACFRREKMSAGKDVRGIKRLHQFDKVELYKYCKPEDSFAELEKMVADAEEIADALKIPYRLKQLVTADISFGSAKSYDIEMYSPGVDEWLEVSSCSNCTDFQGRRANVRFRRTSEAKPEFVHTLNGSGLALPRVMISVIENYQQPDGSIVIPEVLRPFMGVDVIR</sequence>
<comment type="function">
    <text evidence="1">Catalyzes the attachment of serine to tRNA(Ser). Is also able to aminoacylate tRNA(Sec) with serine, to form the misacylated tRNA L-seryl-tRNA(Sec), which will be further converted into selenocysteinyl-tRNA(Sec).</text>
</comment>
<comment type="catalytic activity">
    <reaction evidence="1">
        <text>tRNA(Ser) + L-serine + ATP = L-seryl-tRNA(Ser) + AMP + diphosphate + H(+)</text>
        <dbReference type="Rhea" id="RHEA:12292"/>
        <dbReference type="Rhea" id="RHEA-COMP:9669"/>
        <dbReference type="Rhea" id="RHEA-COMP:9703"/>
        <dbReference type="ChEBI" id="CHEBI:15378"/>
        <dbReference type="ChEBI" id="CHEBI:30616"/>
        <dbReference type="ChEBI" id="CHEBI:33019"/>
        <dbReference type="ChEBI" id="CHEBI:33384"/>
        <dbReference type="ChEBI" id="CHEBI:78442"/>
        <dbReference type="ChEBI" id="CHEBI:78533"/>
        <dbReference type="ChEBI" id="CHEBI:456215"/>
        <dbReference type="EC" id="6.1.1.11"/>
    </reaction>
</comment>
<comment type="catalytic activity">
    <reaction evidence="1">
        <text>tRNA(Sec) + L-serine + ATP = L-seryl-tRNA(Sec) + AMP + diphosphate + H(+)</text>
        <dbReference type="Rhea" id="RHEA:42580"/>
        <dbReference type="Rhea" id="RHEA-COMP:9742"/>
        <dbReference type="Rhea" id="RHEA-COMP:10128"/>
        <dbReference type="ChEBI" id="CHEBI:15378"/>
        <dbReference type="ChEBI" id="CHEBI:30616"/>
        <dbReference type="ChEBI" id="CHEBI:33019"/>
        <dbReference type="ChEBI" id="CHEBI:33384"/>
        <dbReference type="ChEBI" id="CHEBI:78442"/>
        <dbReference type="ChEBI" id="CHEBI:78533"/>
        <dbReference type="ChEBI" id="CHEBI:456215"/>
        <dbReference type="EC" id="6.1.1.11"/>
    </reaction>
</comment>
<comment type="pathway">
    <text evidence="1">Aminoacyl-tRNA biosynthesis; selenocysteinyl-tRNA(Sec) biosynthesis; L-seryl-tRNA(Sec) from L-serine and tRNA(Sec): step 1/1.</text>
</comment>
<comment type="subunit">
    <text evidence="1">Homodimer. The tRNA molecule binds across the dimer.</text>
</comment>
<comment type="subcellular location">
    <subcellularLocation>
        <location evidence="1">Cytoplasm</location>
    </subcellularLocation>
</comment>
<comment type="domain">
    <text evidence="1">Consists of two distinct domains, a catalytic core and a N-terminal extension that is involved in tRNA binding.</text>
</comment>
<comment type="similarity">
    <text evidence="1">Belongs to the class-II aminoacyl-tRNA synthetase family. Type-1 seryl-tRNA synthetase subfamily.</text>
</comment>
<name>SYS_DEHMB</name>
<accession>A5FRN4</accession>
<proteinExistence type="inferred from homology"/>